<organism>
    <name type="scientific">Mycobacterium tuberculosis (strain CDC 1551 / Oshkosh)</name>
    <dbReference type="NCBI Taxonomy" id="83331"/>
    <lineage>
        <taxon>Bacteria</taxon>
        <taxon>Bacillati</taxon>
        <taxon>Actinomycetota</taxon>
        <taxon>Actinomycetes</taxon>
        <taxon>Mycobacteriales</taxon>
        <taxon>Mycobacteriaceae</taxon>
        <taxon>Mycobacterium</taxon>
        <taxon>Mycobacterium tuberculosis complex</taxon>
    </lineage>
</organism>
<comment type="catalytic activity">
    <reaction>
        <text>ATP + H2O = ADP + phosphate + H(+)</text>
        <dbReference type="Rhea" id="RHEA:13065"/>
        <dbReference type="ChEBI" id="CHEBI:15377"/>
        <dbReference type="ChEBI" id="CHEBI:15378"/>
        <dbReference type="ChEBI" id="CHEBI:30616"/>
        <dbReference type="ChEBI" id="CHEBI:43474"/>
        <dbReference type="ChEBI" id="CHEBI:456216"/>
    </reaction>
</comment>
<comment type="subcellular location">
    <subcellularLocation>
        <location evidence="5">Cell membrane</location>
        <topology evidence="5">Multi-pass membrane protein</topology>
    </subcellularLocation>
</comment>
<comment type="similarity">
    <text evidence="5">Belongs to the cation transport ATPase (P-type) (TC 3.A.3) family. Type IB subfamily.</text>
</comment>
<reference key="1">
    <citation type="journal article" date="2002" name="J. Bacteriol.">
        <title>Whole-genome comparison of Mycobacterium tuberculosis clinical and laboratory strains.</title>
        <authorList>
            <person name="Fleischmann R.D."/>
            <person name="Alland D."/>
            <person name="Eisen J.A."/>
            <person name="Carpenter L."/>
            <person name="White O."/>
            <person name="Peterson J.D."/>
            <person name="DeBoy R.T."/>
            <person name="Dodson R.J."/>
            <person name="Gwinn M.L."/>
            <person name="Haft D.H."/>
            <person name="Hickey E.K."/>
            <person name="Kolonay J.F."/>
            <person name="Nelson W.C."/>
            <person name="Umayam L.A."/>
            <person name="Ermolaeva M.D."/>
            <person name="Salzberg S.L."/>
            <person name="Delcher A."/>
            <person name="Utterback T.R."/>
            <person name="Weidman J.F."/>
            <person name="Khouri H.M."/>
            <person name="Gill J."/>
            <person name="Mikula A."/>
            <person name="Bishai W."/>
            <person name="Jacobs W.R. Jr."/>
            <person name="Venter J.C."/>
            <person name="Fraser C.M."/>
        </authorList>
    </citation>
    <scope>NUCLEOTIDE SEQUENCE [LARGE SCALE GENOMIC DNA]</scope>
    <source>
        <strain>CDC 1551 / Oshkosh</strain>
    </source>
</reference>
<name>CTPG_MYCTO</name>
<gene>
    <name type="primary">ctpG</name>
    <name type="ordered locus">MT2048</name>
</gene>
<accession>P9WPS6</accession>
<accession>L0TB69</accession>
<accession>P63689</accession>
<accession>Q10866</accession>
<feature type="chain" id="PRO_0000426895" description="Probable cation-transporting ATPase G">
    <location>
        <begin position="1"/>
        <end position="771"/>
    </location>
</feature>
<feature type="transmembrane region" description="Helical" evidence="2">
    <location>
        <begin position="72"/>
        <end position="92"/>
    </location>
</feature>
<feature type="transmembrane region" description="Helical" evidence="2">
    <location>
        <begin position="163"/>
        <end position="183"/>
    </location>
</feature>
<feature type="transmembrane region" description="Helical" evidence="2">
    <location>
        <begin position="209"/>
        <end position="229"/>
    </location>
</feature>
<feature type="transmembrane region" description="Helical" evidence="2">
    <location>
        <begin position="330"/>
        <end position="350"/>
    </location>
</feature>
<feature type="transmembrane region" description="Helical" evidence="2">
    <location>
        <begin position="387"/>
        <end position="407"/>
    </location>
</feature>
<feature type="transmembrane region" description="Helical" evidence="2">
    <location>
        <begin position="411"/>
        <end position="431"/>
    </location>
</feature>
<feature type="transmembrane region" description="Helical" evidence="2">
    <location>
        <begin position="657"/>
        <end position="677"/>
    </location>
</feature>
<feature type="transmembrane region" description="Helical" evidence="2">
    <location>
        <begin position="716"/>
        <end position="736"/>
    </location>
</feature>
<feature type="domain" description="HMA" evidence="3">
    <location>
        <begin position="19"/>
        <end position="86"/>
    </location>
</feature>
<feature type="region of interest" description="Disordered" evidence="4">
    <location>
        <begin position="122"/>
        <end position="143"/>
    </location>
</feature>
<feature type="active site" description="4-aspartylphosphate intermediate" evidence="1">
    <location>
        <position position="462"/>
    </location>
</feature>
<feature type="binding site" evidence="1">
    <location>
        <position position="651"/>
    </location>
    <ligand>
        <name>Mg(2+)</name>
        <dbReference type="ChEBI" id="CHEBI:18420"/>
    </ligand>
</feature>
<feature type="binding site" evidence="1">
    <location>
        <position position="655"/>
    </location>
    <ligand>
        <name>Mg(2+)</name>
        <dbReference type="ChEBI" id="CHEBI:18420"/>
    </ligand>
</feature>
<evidence type="ECO:0000250" key="1"/>
<evidence type="ECO:0000255" key="2"/>
<evidence type="ECO:0000255" key="3">
    <source>
        <dbReference type="PROSITE-ProRule" id="PRU00280"/>
    </source>
</evidence>
<evidence type="ECO:0000256" key="4">
    <source>
        <dbReference type="SAM" id="MobiDB-lite"/>
    </source>
</evidence>
<evidence type="ECO:0000305" key="5"/>
<dbReference type="EC" id="7.2.2.-"/>
<dbReference type="EMBL" id="AE000516">
    <property type="protein sequence ID" value="AAK46325.1"/>
    <property type="molecule type" value="Genomic_DNA"/>
</dbReference>
<dbReference type="PIR" id="F70757">
    <property type="entry name" value="F70757"/>
</dbReference>
<dbReference type="RefSeq" id="WP_003899120.1">
    <property type="nucleotide sequence ID" value="NZ_KK341227.1"/>
</dbReference>
<dbReference type="SMR" id="P9WPS6"/>
<dbReference type="KEGG" id="mtc:MT2048"/>
<dbReference type="PATRIC" id="fig|83331.31.peg.2205"/>
<dbReference type="HOGENOM" id="CLU_001771_6_3_11"/>
<dbReference type="Proteomes" id="UP000001020">
    <property type="component" value="Chromosome"/>
</dbReference>
<dbReference type="GO" id="GO:0005886">
    <property type="term" value="C:plasma membrane"/>
    <property type="evidence" value="ECO:0007669"/>
    <property type="project" value="UniProtKB-SubCell"/>
</dbReference>
<dbReference type="GO" id="GO:0005524">
    <property type="term" value="F:ATP binding"/>
    <property type="evidence" value="ECO:0007669"/>
    <property type="project" value="UniProtKB-KW"/>
</dbReference>
<dbReference type="GO" id="GO:0016887">
    <property type="term" value="F:ATP hydrolysis activity"/>
    <property type="evidence" value="ECO:0007669"/>
    <property type="project" value="InterPro"/>
</dbReference>
<dbReference type="GO" id="GO:0019829">
    <property type="term" value="F:ATPase-coupled monoatomic cation transmembrane transporter activity"/>
    <property type="evidence" value="ECO:0007669"/>
    <property type="project" value="InterPro"/>
</dbReference>
<dbReference type="GO" id="GO:0015086">
    <property type="term" value="F:cadmium ion transmembrane transporter activity"/>
    <property type="evidence" value="ECO:0007669"/>
    <property type="project" value="TreeGrafter"/>
</dbReference>
<dbReference type="GO" id="GO:0046872">
    <property type="term" value="F:metal ion binding"/>
    <property type="evidence" value="ECO:0007669"/>
    <property type="project" value="UniProtKB-KW"/>
</dbReference>
<dbReference type="CDD" id="cd02079">
    <property type="entry name" value="P-type_ATPase_HM"/>
    <property type="match status" value="1"/>
</dbReference>
<dbReference type="FunFam" id="2.70.150.10:FF:000097">
    <property type="entry name" value="Cation transporter ATPase G"/>
    <property type="match status" value="1"/>
</dbReference>
<dbReference type="Gene3D" id="3.40.1110.10">
    <property type="entry name" value="Calcium-transporting ATPase, cytoplasmic domain N"/>
    <property type="match status" value="1"/>
</dbReference>
<dbReference type="Gene3D" id="2.70.150.10">
    <property type="entry name" value="Calcium-transporting ATPase, cytoplasmic transduction domain A"/>
    <property type="match status" value="1"/>
</dbReference>
<dbReference type="Gene3D" id="3.40.50.1000">
    <property type="entry name" value="HAD superfamily/HAD-like"/>
    <property type="match status" value="1"/>
</dbReference>
<dbReference type="InterPro" id="IPR023299">
    <property type="entry name" value="ATPase_P-typ_cyto_dom_N"/>
</dbReference>
<dbReference type="InterPro" id="IPR018303">
    <property type="entry name" value="ATPase_P-typ_P_site"/>
</dbReference>
<dbReference type="InterPro" id="IPR023298">
    <property type="entry name" value="ATPase_P-typ_TM_dom_sf"/>
</dbReference>
<dbReference type="InterPro" id="IPR008250">
    <property type="entry name" value="ATPase_P-typ_transduc_dom_A_sf"/>
</dbReference>
<dbReference type="InterPro" id="IPR051014">
    <property type="entry name" value="Cation_Transport_ATPase_IB"/>
</dbReference>
<dbReference type="InterPro" id="IPR036412">
    <property type="entry name" value="HAD-like_sf"/>
</dbReference>
<dbReference type="InterPro" id="IPR023214">
    <property type="entry name" value="HAD_sf"/>
</dbReference>
<dbReference type="InterPro" id="IPR006121">
    <property type="entry name" value="HMA_dom"/>
</dbReference>
<dbReference type="InterPro" id="IPR027256">
    <property type="entry name" value="P-typ_ATPase_IB"/>
</dbReference>
<dbReference type="InterPro" id="IPR001757">
    <property type="entry name" value="P_typ_ATPase"/>
</dbReference>
<dbReference type="InterPro" id="IPR044492">
    <property type="entry name" value="P_typ_ATPase_HD_dom"/>
</dbReference>
<dbReference type="NCBIfam" id="TIGR01512">
    <property type="entry name" value="ATPase-IB2_Cd"/>
    <property type="match status" value="1"/>
</dbReference>
<dbReference type="NCBIfam" id="TIGR01525">
    <property type="entry name" value="ATPase-IB_hvy"/>
    <property type="match status" value="1"/>
</dbReference>
<dbReference type="NCBIfam" id="TIGR01494">
    <property type="entry name" value="ATPase_P-type"/>
    <property type="match status" value="1"/>
</dbReference>
<dbReference type="PANTHER" id="PTHR48085">
    <property type="entry name" value="CADMIUM/ZINC-TRANSPORTING ATPASE HMA2-RELATED"/>
    <property type="match status" value="1"/>
</dbReference>
<dbReference type="PANTHER" id="PTHR48085:SF5">
    <property type="entry name" value="CADMIUM_ZINC-TRANSPORTING ATPASE HMA4-RELATED"/>
    <property type="match status" value="1"/>
</dbReference>
<dbReference type="Pfam" id="PF00122">
    <property type="entry name" value="E1-E2_ATPase"/>
    <property type="match status" value="1"/>
</dbReference>
<dbReference type="Pfam" id="PF00702">
    <property type="entry name" value="Hydrolase"/>
    <property type="match status" value="1"/>
</dbReference>
<dbReference type="PRINTS" id="PR00119">
    <property type="entry name" value="CATATPASE"/>
</dbReference>
<dbReference type="SFLD" id="SFLDS00003">
    <property type="entry name" value="Haloacid_Dehalogenase"/>
    <property type="match status" value="1"/>
</dbReference>
<dbReference type="SFLD" id="SFLDF00027">
    <property type="entry name" value="p-type_atpase"/>
    <property type="match status" value="1"/>
</dbReference>
<dbReference type="SUPFAM" id="SSF81653">
    <property type="entry name" value="Calcium ATPase, transduction domain A"/>
    <property type="match status" value="1"/>
</dbReference>
<dbReference type="SUPFAM" id="SSF81665">
    <property type="entry name" value="Calcium ATPase, transmembrane domain M"/>
    <property type="match status" value="1"/>
</dbReference>
<dbReference type="SUPFAM" id="SSF56784">
    <property type="entry name" value="HAD-like"/>
    <property type="match status" value="1"/>
</dbReference>
<dbReference type="PROSITE" id="PS00154">
    <property type="entry name" value="ATPASE_E1_E2"/>
    <property type="match status" value="1"/>
</dbReference>
<dbReference type="PROSITE" id="PS50846">
    <property type="entry name" value="HMA_2"/>
    <property type="match status" value="1"/>
</dbReference>
<proteinExistence type="inferred from homology"/>
<protein>
    <recommendedName>
        <fullName>Probable cation-transporting ATPase G</fullName>
        <ecNumber>7.2.2.-</ecNumber>
    </recommendedName>
</protein>
<sequence length="771" mass="79309">MTTVVDAEVQLTVVSDAAGRMRVQATGFQFDAGRAVAIEDTVGKVAGVQAVHAYPRTASIVIWYSRAICDTAAILSAIIDAETVPAAAVPAYASRSASNRKAGVVQKIIDWSTRTLSGVRRDVAAQPSGETSDACCDGEDNEDREPEQLWQVAKLRRAAFSGVLLTASLVAAWAYPLWPVVLGLKALALAVGASTFVPSSLKRLAEGRVGVGTLMTIAALGAVALGELGEAATLAFLFSISEGLEEYATARTRRGLRALLSLVPDQATVLREGTETIVASTELHVGDQMIVKPGERLATDGIIRAGRTALDVSAITGESVPVEVGPGDEVFAGSINGLGVLQVGVTATAANNSLARIVHIVEAEQVRKGASQRLADCIARPLVPSIMIAAALIAGTGSVLGNPLVWIERALVVLVAAAPCALAIAVPVTVVASIGAASRLGVLIKGGAALETLGTIRAVALDKTGTLTANRPVVIDVATTNGATREEVLAVAAALEARSEHPLAVAVLAATQATTAASDVQAVPGAGLIGRLDGRVVRLGRPGWLDAAELADHVACMQQAGATAVLVERDQQLLGAIAVRDELRPEAAEVVAGLRTGGYQVTMLTGDNHATAAALAAQAGIEQVHAELRPEDKAHLVAQLRARQPTAMVGDGVNDAPALAAADLGIAMGAMGTDVAIETADVALMGQDLRHLPQALDHARRSRQIMVQNVGLSLSIITVLMPLALFGILGLAAVVLVHEFTEVIVIANGVRAGRIKPLAGPPKTPDRTIPG</sequence>
<keyword id="KW-0067">ATP-binding</keyword>
<keyword id="KW-1003">Cell membrane</keyword>
<keyword id="KW-0460">Magnesium</keyword>
<keyword id="KW-0472">Membrane</keyword>
<keyword id="KW-0479">Metal-binding</keyword>
<keyword id="KW-0547">Nucleotide-binding</keyword>
<keyword id="KW-0597">Phosphoprotein</keyword>
<keyword id="KW-1185">Reference proteome</keyword>
<keyword id="KW-1278">Translocase</keyword>
<keyword id="KW-0812">Transmembrane</keyword>
<keyword id="KW-1133">Transmembrane helix</keyword>